<reference evidence="7" key="1">
    <citation type="journal article" date="2016" name="Nature">
        <title>Genome evolution in the allotetraploid frog Xenopus laevis.</title>
        <authorList>
            <person name="Session A.M."/>
            <person name="Uno Y."/>
            <person name="Kwon T."/>
            <person name="Chapman J.A."/>
            <person name="Toyoda A."/>
            <person name="Takahashi S."/>
            <person name="Fukui A."/>
            <person name="Hikosaka A."/>
            <person name="Suzuki A."/>
            <person name="Kondo M."/>
            <person name="van Heeringen S.J."/>
            <person name="Quigley I."/>
            <person name="Heinz S."/>
            <person name="Ogino H."/>
            <person name="Ochi H."/>
            <person name="Hellsten U."/>
            <person name="Lyons J.B."/>
            <person name="Simakov O."/>
            <person name="Putnam N."/>
            <person name="Stites J."/>
            <person name="Kuroki Y."/>
            <person name="Tanaka T."/>
            <person name="Michiue T."/>
            <person name="Watanabe M."/>
            <person name="Bogdanovic O."/>
            <person name="Lister R."/>
            <person name="Georgiou G."/>
            <person name="Paranjpe S.S."/>
            <person name="van Kruijsbergen I."/>
            <person name="Shu S."/>
            <person name="Carlson J."/>
            <person name="Kinoshita T."/>
            <person name="Ohta Y."/>
            <person name="Mawaribuchi S."/>
            <person name="Jenkins J."/>
            <person name="Grimwood J."/>
            <person name="Schmutz J."/>
            <person name="Mitros T."/>
            <person name="Mozaffari S.V."/>
            <person name="Suzuki Y."/>
            <person name="Haramoto Y."/>
            <person name="Yamamoto T.S."/>
            <person name="Takagi C."/>
            <person name="Heald R."/>
            <person name="Miller K."/>
            <person name="Haudenschild C."/>
            <person name="Kitzman J."/>
            <person name="Nakayama T."/>
            <person name="Izutsu Y."/>
            <person name="Robert J."/>
            <person name="Fortriede J."/>
            <person name="Burns K."/>
            <person name="Lotay V."/>
            <person name="Karimi K."/>
            <person name="Yasuoka Y."/>
            <person name="Dichmann D.S."/>
            <person name="Flajnik M.F."/>
            <person name="Houston D.W."/>
            <person name="Shendure J."/>
            <person name="DuPasquier L."/>
            <person name="Vize P.D."/>
            <person name="Zorn A.M."/>
            <person name="Ito M."/>
            <person name="Marcotte E.M."/>
            <person name="Wallingford J.B."/>
            <person name="Ito Y."/>
            <person name="Asashima M."/>
            <person name="Ueno N."/>
            <person name="Matsuda Y."/>
            <person name="Veenstra G.J."/>
            <person name="Fujiyama A."/>
            <person name="Harland R.M."/>
            <person name="Taira M."/>
            <person name="Rokhsar D.S."/>
        </authorList>
    </citation>
    <scope>NUCLEOTIDE SEQUENCE [LARGE SCALE GENOMIC DNA]</scope>
    <source>
        <strain evidence="7">J</strain>
    </source>
</reference>
<reference evidence="6" key="2">
    <citation type="submission" date="2004-07" db="EMBL/GenBank/DDBJ databases">
        <authorList>
            <consortium name="NIH - Xenopus Gene Collection (XGC) project"/>
        </authorList>
    </citation>
    <scope>NUCLEOTIDE SEQUENCE [LARGE SCALE MRNA]</scope>
    <source>
        <tissue evidence="6">Brain</tissue>
    </source>
</reference>
<reference evidence="5" key="3">
    <citation type="journal article" date="2016" name="Cell Rep.">
        <title>c21orf59/kurly controls both cilia motility and polarization.</title>
        <authorList>
            <person name="Jaffe K.M."/>
            <person name="Grimes D.T."/>
            <person name="Schottenfeld-Roames J."/>
            <person name="Werner M.E."/>
            <person name="Ku T.S."/>
            <person name="Kim S.K."/>
            <person name="Pelliccia J.L."/>
            <person name="Morante N.F."/>
            <person name="Mitchell B.J."/>
            <person name="Burdine R.D."/>
        </authorList>
    </citation>
    <scope>FUNCTION</scope>
    <scope>SUBCELLULAR LOCATION</scope>
    <scope>DISRUPTION PHENOTYPE</scope>
</reference>
<keyword id="KW-0966">Cell projection</keyword>
<keyword id="KW-0969">Cilium</keyword>
<keyword id="KW-0963">Cytoplasm</keyword>
<keyword id="KW-0206">Cytoskeleton</keyword>
<keyword id="KW-1185">Reference proteome</keyword>
<comment type="function">
    <text evidence="2 3">Plays a role in motile cilium function, possibly by acting on outer dynein arm assembly (PubMed:26904945). Seems to be important for initiation rather than maintenance of cilium motility (By similarity). Required for correct positioning of the cilium at the apical cell surface, suggesting an additional role in the planar cell polarity (PCP) pathway (PubMed:26904945). May suppress canonical Wnt signaling activity (PubMed:26904945).</text>
</comment>
<comment type="subcellular location">
    <subcellularLocation>
        <location evidence="3">Cytoplasm</location>
    </subcellularLocation>
    <subcellularLocation>
        <location evidence="3">Cytoplasm</location>
        <location evidence="3">Cytoskeleton</location>
        <location evidence="3">Cilium basal body</location>
    </subcellularLocation>
    <text evidence="1">Appears in cytoplasmic puncta, compatible with a centrosomal localization (By similarity).</text>
</comment>
<comment type="disruption phenotype">
    <text evidence="3">Morpholino knockdown of the protein results in loss of cilia-driven fluid flow along the anterior-posterior axis. Multiciliated cells show loss of coordinated cilium polarity with many cilia pointing towards the anterior instead of the posterior. The planar cell polarity (PCP) component prickle2 is uniformly distributed around the cell margin, instead of being asymmetrically localized to the posterior of the cell.</text>
</comment>
<comment type="similarity">
    <text evidence="5">Belongs to the CFAP298 family.</text>
</comment>
<protein>
    <recommendedName>
        <fullName evidence="5">Cilia- and flagella-associated protein 298-A</fullName>
    </recommendedName>
    <alternativeName>
        <fullName evidence="5">Protein kurly-A</fullName>
    </alternativeName>
</protein>
<feature type="chain" id="PRO_0000441859" description="Cilia- and flagella-associated protein 298-A">
    <location>
        <begin position="1"/>
        <end position="290"/>
    </location>
</feature>
<feature type="sequence conflict" description="In Ref. 2; AAH77554." evidence="5" ref="2">
    <original>V</original>
    <variation>I</variation>
    <location>
        <position position="24"/>
    </location>
</feature>
<feature type="sequence conflict" description="In Ref. 2; AAH77554." evidence="5" ref="2">
    <original>N</original>
    <variation>S</variation>
    <location>
        <position position="61"/>
    </location>
</feature>
<feature type="sequence conflict" description="In Ref. 2; AAH77554." evidence="5" ref="2">
    <original>Q</original>
    <variation>H</variation>
    <location>
        <position position="199"/>
    </location>
</feature>
<feature type="sequence conflict" description="In Ref. 2; AAH77554." evidence="5" ref="2">
    <original>R</original>
    <variation>K</variation>
    <location>
        <position position="215"/>
    </location>
</feature>
<feature type="sequence conflict" description="In Ref. 2; AAH77554." evidence="5" ref="2">
    <original>A</original>
    <variation>G</variation>
    <location>
        <position position="229"/>
    </location>
</feature>
<feature type="sequence conflict" description="In Ref. 2; AAH77554." evidence="5" ref="2">
    <original>T</original>
    <variation>S</variation>
    <location>
        <position position="235"/>
    </location>
</feature>
<proteinExistence type="evidence at transcript level"/>
<dbReference type="EMBL" id="CM004468">
    <property type="protein sequence ID" value="OCT93829.1"/>
    <property type="molecule type" value="Genomic_DNA"/>
</dbReference>
<dbReference type="EMBL" id="BC077554">
    <property type="protein sequence ID" value="AAH77554.1"/>
    <property type="molecule type" value="mRNA"/>
</dbReference>
<dbReference type="RefSeq" id="NP_001086851.1">
    <property type="nucleotide sequence ID" value="NM_001093382.1"/>
</dbReference>
<dbReference type="STRING" id="8355.A0A1L8HCK2"/>
<dbReference type="PaxDb" id="8355-A0A1L8HCK2"/>
<dbReference type="DNASU" id="446686"/>
<dbReference type="GeneID" id="446686"/>
<dbReference type="KEGG" id="xla:446686"/>
<dbReference type="AGR" id="Xenbase:XB-GENE-5910499"/>
<dbReference type="CTD" id="446686"/>
<dbReference type="Xenbase" id="XB-GENE-5910499">
    <property type="gene designation" value="cfap298.L"/>
</dbReference>
<dbReference type="OMA" id="YRKQEEW"/>
<dbReference type="OrthoDB" id="276065at2759"/>
<dbReference type="Proteomes" id="UP000186698">
    <property type="component" value="Chromosome 2L"/>
</dbReference>
<dbReference type="Proteomes" id="UP000694892">
    <property type="component" value="Chromosome 2L"/>
</dbReference>
<dbReference type="Bgee" id="446686">
    <property type="expression patterns" value="Expressed in testis and 19 other cell types or tissues"/>
</dbReference>
<dbReference type="GO" id="GO:0005929">
    <property type="term" value="C:cilium"/>
    <property type="evidence" value="ECO:0007669"/>
    <property type="project" value="UniProtKB-KW"/>
</dbReference>
<dbReference type="GO" id="GO:0005737">
    <property type="term" value="C:cytoplasm"/>
    <property type="evidence" value="ECO:0007669"/>
    <property type="project" value="UniProtKB-SubCell"/>
</dbReference>
<dbReference type="GO" id="GO:0005856">
    <property type="term" value="C:cytoskeleton"/>
    <property type="evidence" value="ECO:0007669"/>
    <property type="project" value="UniProtKB-KW"/>
</dbReference>
<dbReference type="GO" id="GO:0003352">
    <property type="term" value="P:regulation of cilium movement"/>
    <property type="evidence" value="ECO:0007669"/>
    <property type="project" value="InterPro"/>
</dbReference>
<dbReference type="InterPro" id="IPR021298">
    <property type="entry name" value="CFAP298"/>
</dbReference>
<dbReference type="PANTHER" id="PTHR13238:SF0">
    <property type="entry name" value="CILIA- AND FLAGELLA-ASSOCIATED PROTEIN 298"/>
    <property type="match status" value="1"/>
</dbReference>
<dbReference type="PANTHER" id="PTHR13238">
    <property type="entry name" value="PROTEIN C21ORF59"/>
    <property type="match status" value="1"/>
</dbReference>
<dbReference type="Pfam" id="PF11069">
    <property type="entry name" value="CFAP298"/>
    <property type="match status" value="1"/>
</dbReference>
<gene>
    <name type="primary">cfap298-a</name>
    <name evidence="4" type="synonym">kur-a</name>
</gene>
<evidence type="ECO:0000250" key="1">
    <source>
        <dbReference type="UniProtKB" id="Q5U3Z0"/>
    </source>
</evidence>
<evidence type="ECO:0000250" key="2">
    <source>
        <dbReference type="UniProtKB" id="Q6DRC3"/>
    </source>
</evidence>
<evidence type="ECO:0000269" key="3">
    <source>
    </source>
</evidence>
<evidence type="ECO:0000303" key="4">
    <source>
    </source>
</evidence>
<evidence type="ECO:0000305" key="5"/>
<evidence type="ECO:0000312" key="6">
    <source>
        <dbReference type="EMBL" id="AAH77554.1"/>
    </source>
</evidence>
<evidence type="ECO:0000312" key="7">
    <source>
        <dbReference type="Proteomes" id="UP000186698"/>
    </source>
</evidence>
<organism evidence="7">
    <name type="scientific">Xenopus laevis</name>
    <name type="common">African clawed frog</name>
    <dbReference type="NCBI Taxonomy" id="8355"/>
    <lineage>
        <taxon>Eukaryota</taxon>
        <taxon>Metazoa</taxon>
        <taxon>Chordata</taxon>
        <taxon>Craniata</taxon>
        <taxon>Vertebrata</taxon>
        <taxon>Euteleostomi</taxon>
        <taxon>Amphibia</taxon>
        <taxon>Batrachia</taxon>
        <taxon>Anura</taxon>
        <taxon>Pipoidea</taxon>
        <taxon>Pipidae</taxon>
        <taxon>Xenopodinae</taxon>
        <taxon>Xenopus</taxon>
        <taxon>Xenopus</taxon>
    </lineage>
</organism>
<sequence>MVRLHVKKGDESQFLFDTSVTVPVEELVKQITAIYNGRLKIDRICSEMGELAEHGITMPPNMQGLADEQIEELKLKDEWEERCVPSGGSVFKKDEIGRRNGHAPSDSMKKVLQKTMEEAKALISKKQAEANVCVTLEMVKEATDQLRGAVMIVYPMGLPPHDPIRMEFENNEDLSGTHAGQLVIEEPESQLWWAGKELQRKQKLSDYVGKNEKTRIIVKIQKRGQGAPAREPVITQEEQKKLMMHYYRRQEEFKKLEEDEDISYLNAEWADSNSLKRQFQGVKDIKWKPR</sequence>
<accession>A0A1L8HCK2</accession>
<accession>Q6DDK4</accession>
<name>C298A_XENLA</name>